<comment type="function">
    <text evidence="1">May play a key role in the regulation of the intracellular concentration of adenosylhomocysteine.</text>
</comment>
<comment type="catalytic activity">
    <reaction evidence="1">
        <text>S-adenosyl-L-homocysteine + H2O = L-homocysteine + adenosine</text>
        <dbReference type="Rhea" id="RHEA:21708"/>
        <dbReference type="ChEBI" id="CHEBI:15377"/>
        <dbReference type="ChEBI" id="CHEBI:16335"/>
        <dbReference type="ChEBI" id="CHEBI:57856"/>
        <dbReference type="ChEBI" id="CHEBI:58199"/>
        <dbReference type="EC" id="3.13.2.1"/>
    </reaction>
</comment>
<comment type="cofactor">
    <cofactor evidence="1">
        <name>NAD(+)</name>
        <dbReference type="ChEBI" id="CHEBI:57540"/>
    </cofactor>
    <text evidence="1">Binds 1 NAD(+) per subunit.</text>
</comment>
<comment type="pathway">
    <text evidence="1">Amino-acid biosynthesis; L-homocysteine biosynthesis; L-homocysteine from S-adenosyl-L-homocysteine: step 1/1.</text>
</comment>
<comment type="subcellular location">
    <subcellularLocation>
        <location evidence="1">Cytoplasm</location>
    </subcellularLocation>
</comment>
<comment type="similarity">
    <text evidence="1">Belongs to the adenosylhomocysteinase family.</text>
</comment>
<keyword id="KW-0963">Cytoplasm</keyword>
<keyword id="KW-0378">Hydrolase</keyword>
<keyword id="KW-0520">NAD</keyword>
<keyword id="KW-0554">One-carbon metabolism</keyword>
<keyword id="KW-1185">Reference proteome</keyword>
<organism>
    <name type="scientific">Herminiimonas arsenicoxydans</name>
    <dbReference type="NCBI Taxonomy" id="204773"/>
    <lineage>
        <taxon>Bacteria</taxon>
        <taxon>Pseudomonadati</taxon>
        <taxon>Pseudomonadota</taxon>
        <taxon>Betaproteobacteria</taxon>
        <taxon>Burkholderiales</taxon>
        <taxon>Oxalobacteraceae</taxon>
        <taxon>Herminiimonas</taxon>
    </lineage>
</organism>
<feature type="chain" id="PRO_1000129285" description="Adenosylhomocysteinase">
    <location>
        <begin position="1"/>
        <end position="479"/>
    </location>
</feature>
<feature type="binding site" evidence="1">
    <location>
        <position position="65"/>
    </location>
    <ligand>
        <name>substrate</name>
    </ligand>
</feature>
<feature type="binding site" evidence="1">
    <location>
        <position position="145"/>
    </location>
    <ligand>
        <name>substrate</name>
    </ligand>
</feature>
<feature type="binding site" evidence="1">
    <location>
        <position position="205"/>
    </location>
    <ligand>
        <name>substrate</name>
    </ligand>
</feature>
<feature type="binding site" evidence="1">
    <location>
        <begin position="206"/>
        <end position="208"/>
    </location>
    <ligand>
        <name>NAD(+)</name>
        <dbReference type="ChEBI" id="CHEBI:57540"/>
    </ligand>
</feature>
<feature type="binding site" evidence="1">
    <location>
        <position position="235"/>
    </location>
    <ligand>
        <name>substrate</name>
    </ligand>
</feature>
<feature type="binding site" evidence="1">
    <location>
        <position position="239"/>
    </location>
    <ligand>
        <name>substrate</name>
    </ligand>
</feature>
<feature type="binding site" evidence="1">
    <location>
        <position position="240"/>
    </location>
    <ligand>
        <name>NAD(+)</name>
        <dbReference type="ChEBI" id="CHEBI:57540"/>
    </ligand>
</feature>
<feature type="binding site" evidence="1">
    <location>
        <begin position="269"/>
        <end position="274"/>
    </location>
    <ligand>
        <name>NAD(+)</name>
        <dbReference type="ChEBI" id="CHEBI:57540"/>
    </ligand>
</feature>
<feature type="binding site" evidence="1">
    <location>
        <position position="292"/>
    </location>
    <ligand>
        <name>NAD(+)</name>
        <dbReference type="ChEBI" id="CHEBI:57540"/>
    </ligand>
</feature>
<feature type="binding site" evidence="1">
    <location>
        <position position="327"/>
    </location>
    <ligand>
        <name>NAD(+)</name>
        <dbReference type="ChEBI" id="CHEBI:57540"/>
    </ligand>
</feature>
<feature type="binding site" evidence="1">
    <location>
        <begin position="348"/>
        <end position="350"/>
    </location>
    <ligand>
        <name>NAD(+)</name>
        <dbReference type="ChEBI" id="CHEBI:57540"/>
    </ligand>
</feature>
<feature type="binding site" evidence="1">
    <location>
        <position position="393"/>
    </location>
    <ligand>
        <name>NAD(+)</name>
        <dbReference type="ChEBI" id="CHEBI:57540"/>
    </ligand>
</feature>
<sequence>MNAAVMTSSTNFSDYVIADLSLSVWGDKEIRIAETEMPGLMAIREEFAAAQPLKGARITGSIHMTIQTAVLIQTLEALGAKVRWASCNIYSTQDHAAAAIAAAGTPVFAVKGETLDDYWEYTHRIFEWPNDDKGAPVYSNMILDDGGDATLLLHLGTRAEKDASVLNNPGSEEEICLFNSIKKHLAVDATWYSKRLPQILGVTEETTTGVHRLYQMHKEGKLAFPAINVNDSVTKSKFDNLYGCRESLVDGIKRATDVMIAGKVAVIAGYGDVGKGSAQAMRALSAQVWVTEIDPICALQAAMEGYRVVTMDYAAEHGDIFVTCTGNYHVITHDHMAKMKDQAIVCNIGHFDNEIEVAALKQYTWENIKPQVDHIIFPDGKRIILLAEGRLVNLGCGTGHPSYVMSSSFANQTIAQIELYANTKNYPVGVYTLPKHLDEKVARLQLKKLNSQLTTLTDEQANYIGVQKAGPYKPEHYRY</sequence>
<gene>
    <name evidence="1" type="primary">ahcY</name>
    <name type="ordered locus">HEAR2950</name>
</gene>
<evidence type="ECO:0000255" key="1">
    <source>
        <dbReference type="HAMAP-Rule" id="MF_00563"/>
    </source>
</evidence>
<proteinExistence type="inferred from homology"/>
<reference key="1">
    <citation type="journal article" date="2007" name="PLoS Genet.">
        <title>A tale of two oxidation states: bacterial colonization of arsenic-rich environments.</title>
        <authorList>
            <person name="Muller D."/>
            <person name="Medigue C."/>
            <person name="Koechler S."/>
            <person name="Barbe V."/>
            <person name="Barakat M."/>
            <person name="Talla E."/>
            <person name="Bonnefoy V."/>
            <person name="Krin E."/>
            <person name="Arsene-Ploetze F."/>
            <person name="Carapito C."/>
            <person name="Chandler M."/>
            <person name="Cournoyer B."/>
            <person name="Cruveiller S."/>
            <person name="Dossat C."/>
            <person name="Duval S."/>
            <person name="Heymann M."/>
            <person name="Leize E."/>
            <person name="Lieutaud A."/>
            <person name="Lievremont D."/>
            <person name="Makita Y."/>
            <person name="Mangenot S."/>
            <person name="Nitschke W."/>
            <person name="Ortet P."/>
            <person name="Perdrial N."/>
            <person name="Schoepp B."/>
            <person name="Siguier P."/>
            <person name="Simeonova D.D."/>
            <person name="Rouy Z."/>
            <person name="Segurens B."/>
            <person name="Turlin E."/>
            <person name="Vallenet D."/>
            <person name="van Dorsselaer A."/>
            <person name="Weiss S."/>
            <person name="Weissenbach J."/>
            <person name="Lett M.-C."/>
            <person name="Danchin A."/>
            <person name="Bertin P.N."/>
        </authorList>
    </citation>
    <scope>NUCLEOTIDE SEQUENCE [LARGE SCALE GENOMIC DNA]</scope>
    <source>
        <strain>ULPAs1</strain>
    </source>
</reference>
<accession>A4G975</accession>
<name>SAHH_HERAR</name>
<dbReference type="EC" id="3.13.2.1" evidence="1"/>
<dbReference type="EMBL" id="CU207211">
    <property type="protein sequence ID" value="CAL63062.1"/>
    <property type="molecule type" value="Genomic_DNA"/>
</dbReference>
<dbReference type="SMR" id="A4G975"/>
<dbReference type="STRING" id="204773.HEAR2950"/>
<dbReference type="KEGG" id="har:HEAR2950"/>
<dbReference type="eggNOG" id="COG0499">
    <property type="taxonomic scope" value="Bacteria"/>
</dbReference>
<dbReference type="HOGENOM" id="CLU_025194_2_1_4"/>
<dbReference type="OrthoDB" id="9802717at2"/>
<dbReference type="UniPathway" id="UPA00314">
    <property type="reaction ID" value="UER00076"/>
</dbReference>
<dbReference type="Proteomes" id="UP000006697">
    <property type="component" value="Chromosome"/>
</dbReference>
<dbReference type="GO" id="GO:0005829">
    <property type="term" value="C:cytosol"/>
    <property type="evidence" value="ECO:0007669"/>
    <property type="project" value="TreeGrafter"/>
</dbReference>
<dbReference type="GO" id="GO:0004013">
    <property type="term" value="F:adenosylhomocysteinase activity"/>
    <property type="evidence" value="ECO:0007669"/>
    <property type="project" value="UniProtKB-UniRule"/>
</dbReference>
<dbReference type="GO" id="GO:0071269">
    <property type="term" value="P:L-homocysteine biosynthetic process"/>
    <property type="evidence" value="ECO:0007669"/>
    <property type="project" value="UniProtKB-UniRule"/>
</dbReference>
<dbReference type="GO" id="GO:0006730">
    <property type="term" value="P:one-carbon metabolic process"/>
    <property type="evidence" value="ECO:0007669"/>
    <property type="project" value="UniProtKB-KW"/>
</dbReference>
<dbReference type="GO" id="GO:0033353">
    <property type="term" value="P:S-adenosylmethionine cycle"/>
    <property type="evidence" value="ECO:0007669"/>
    <property type="project" value="TreeGrafter"/>
</dbReference>
<dbReference type="CDD" id="cd00401">
    <property type="entry name" value="SAHH"/>
    <property type="match status" value="1"/>
</dbReference>
<dbReference type="FunFam" id="3.40.50.720:FF:000004">
    <property type="entry name" value="Adenosylhomocysteinase"/>
    <property type="match status" value="1"/>
</dbReference>
<dbReference type="Gene3D" id="3.40.50.1480">
    <property type="entry name" value="Adenosylhomocysteinase-like"/>
    <property type="match status" value="1"/>
</dbReference>
<dbReference type="Gene3D" id="3.40.50.720">
    <property type="entry name" value="NAD(P)-binding Rossmann-like Domain"/>
    <property type="match status" value="1"/>
</dbReference>
<dbReference type="HAMAP" id="MF_00563">
    <property type="entry name" value="AdoHcyase"/>
    <property type="match status" value="1"/>
</dbReference>
<dbReference type="InterPro" id="IPR042172">
    <property type="entry name" value="Adenosylhomocyst_ase-like_sf"/>
</dbReference>
<dbReference type="InterPro" id="IPR000043">
    <property type="entry name" value="Adenosylhomocysteinase-like"/>
</dbReference>
<dbReference type="InterPro" id="IPR015878">
    <property type="entry name" value="Ado_hCys_hydrolase_NAD-bd"/>
</dbReference>
<dbReference type="InterPro" id="IPR036291">
    <property type="entry name" value="NAD(P)-bd_dom_sf"/>
</dbReference>
<dbReference type="InterPro" id="IPR020082">
    <property type="entry name" value="S-Ado-L-homoCys_hydrolase_CS"/>
</dbReference>
<dbReference type="NCBIfam" id="TIGR00936">
    <property type="entry name" value="ahcY"/>
    <property type="match status" value="1"/>
</dbReference>
<dbReference type="NCBIfam" id="NF004005">
    <property type="entry name" value="PRK05476.2-3"/>
    <property type="match status" value="1"/>
</dbReference>
<dbReference type="PANTHER" id="PTHR23420">
    <property type="entry name" value="ADENOSYLHOMOCYSTEINASE"/>
    <property type="match status" value="1"/>
</dbReference>
<dbReference type="PANTHER" id="PTHR23420:SF0">
    <property type="entry name" value="ADENOSYLHOMOCYSTEINASE"/>
    <property type="match status" value="1"/>
</dbReference>
<dbReference type="Pfam" id="PF05221">
    <property type="entry name" value="AdoHcyase"/>
    <property type="match status" value="1"/>
</dbReference>
<dbReference type="Pfam" id="PF00670">
    <property type="entry name" value="AdoHcyase_NAD"/>
    <property type="match status" value="1"/>
</dbReference>
<dbReference type="PIRSF" id="PIRSF001109">
    <property type="entry name" value="Ad_hcy_hydrolase"/>
    <property type="match status" value="1"/>
</dbReference>
<dbReference type="SMART" id="SM00996">
    <property type="entry name" value="AdoHcyase"/>
    <property type="match status" value="1"/>
</dbReference>
<dbReference type="SMART" id="SM00997">
    <property type="entry name" value="AdoHcyase_NAD"/>
    <property type="match status" value="1"/>
</dbReference>
<dbReference type="SUPFAM" id="SSF52283">
    <property type="entry name" value="Formate/glycerate dehydrogenase catalytic domain-like"/>
    <property type="match status" value="1"/>
</dbReference>
<dbReference type="SUPFAM" id="SSF51735">
    <property type="entry name" value="NAD(P)-binding Rossmann-fold domains"/>
    <property type="match status" value="1"/>
</dbReference>
<dbReference type="PROSITE" id="PS00738">
    <property type="entry name" value="ADOHCYASE_1"/>
    <property type="match status" value="1"/>
</dbReference>
<dbReference type="PROSITE" id="PS00739">
    <property type="entry name" value="ADOHCYASE_2"/>
    <property type="match status" value="1"/>
</dbReference>
<protein>
    <recommendedName>
        <fullName evidence="1">Adenosylhomocysteinase</fullName>
        <ecNumber evidence="1">3.13.2.1</ecNumber>
    </recommendedName>
    <alternativeName>
        <fullName evidence="1">S-adenosyl-L-homocysteine hydrolase</fullName>
        <shortName evidence="1">AdoHcyase</shortName>
    </alternativeName>
</protein>